<comment type="function">
    <text evidence="1">Transfers the 4'-phosphopantetheine moiety from coenzyme A to a Ser of acyl-carrier-protein.</text>
</comment>
<comment type="catalytic activity">
    <reaction evidence="1">
        <text>apo-[ACP] + CoA = holo-[ACP] + adenosine 3',5'-bisphosphate + H(+)</text>
        <dbReference type="Rhea" id="RHEA:12068"/>
        <dbReference type="Rhea" id="RHEA-COMP:9685"/>
        <dbReference type="Rhea" id="RHEA-COMP:9690"/>
        <dbReference type="ChEBI" id="CHEBI:15378"/>
        <dbReference type="ChEBI" id="CHEBI:29999"/>
        <dbReference type="ChEBI" id="CHEBI:57287"/>
        <dbReference type="ChEBI" id="CHEBI:58343"/>
        <dbReference type="ChEBI" id="CHEBI:64479"/>
        <dbReference type="EC" id="2.7.8.7"/>
    </reaction>
</comment>
<comment type="cofactor">
    <cofactor evidence="1">
        <name>Mg(2+)</name>
        <dbReference type="ChEBI" id="CHEBI:18420"/>
    </cofactor>
</comment>
<comment type="subcellular location">
    <subcellularLocation>
        <location evidence="1">Cytoplasm</location>
    </subcellularLocation>
</comment>
<comment type="similarity">
    <text evidence="1">Belongs to the P-Pant transferase superfamily. AcpS family.</text>
</comment>
<name>ACPS_CAMJD</name>
<dbReference type="EC" id="2.7.8.7" evidence="1"/>
<dbReference type="EMBL" id="CP000768">
    <property type="protein sequence ID" value="ABS43888.1"/>
    <property type="molecule type" value="Genomic_DNA"/>
</dbReference>
<dbReference type="SMR" id="A7H5D0"/>
<dbReference type="KEGG" id="cjd:JJD26997_1742"/>
<dbReference type="HOGENOM" id="CLU_089696_0_2_7"/>
<dbReference type="Proteomes" id="UP000002302">
    <property type="component" value="Chromosome"/>
</dbReference>
<dbReference type="GO" id="GO:0005737">
    <property type="term" value="C:cytoplasm"/>
    <property type="evidence" value="ECO:0007669"/>
    <property type="project" value="UniProtKB-SubCell"/>
</dbReference>
<dbReference type="GO" id="GO:0008897">
    <property type="term" value="F:holo-[acyl-carrier-protein] synthase activity"/>
    <property type="evidence" value="ECO:0007669"/>
    <property type="project" value="UniProtKB-UniRule"/>
</dbReference>
<dbReference type="GO" id="GO:0000287">
    <property type="term" value="F:magnesium ion binding"/>
    <property type="evidence" value="ECO:0007669"/>
    <property type="project" value="UniProtKB-UniRule"/>
</dbReference>
<dbReference type="GO" id="GO:0006633">
    <property type="term" value="P:fatty acid biosynthetic process"/>
    <property type="evidence" value="ECO:0007669"/>
    <property type="project" value="UniProtKB-UniRule"/>
</dbReference>
<dbReference type="Gene3D" id="3.90.470.20">
    <property type="entry name" value="4'-phosphopantetheinyl transferase domain"/>
    <property type="match status" value="1"/>
</dbReference>
<dbReference type="HAMAP" id="MF_00101">
    <property type="entry name" value="AcpS"/>
    <property type="match status" value="1"/>
</dbReference>
<dbReference type="InterPro" id="IPR008278">
    <property type="entry name" value="4-PPantetheinyl_Trfase_dom"/>
</dbReference>
<dbReference type="InterPro" id="IPR037143">
    <property type="entry name" value="4-PPantetheinyl_Trfase_dom_sf"/>
</dbReference>
<dbReference type="InterPro" id="IPR002582">
    <property type="entry name" value="ACPS"/>
</dbReference>
<dbReference type="InterPro" id="IPR004568">
    <property type="entry name" value="Ppantetheine-prot_Trfase_dom"/>
</dbReference>
<dbReference type="NCBIfam" id="TIGR00516">
    <property type="entry name" value="acpS"/>
    <property type="match status" value="1"/>
</dbReference>
<dbReference type="NCBIfam" id="TIGR00556">
    <property type="entry name" value="pantethn_trn"/>
    <property type="match status" value="1"/>
</dbReference>
<dbReference type="Pfam" id="PF01648">
    <property type="entry name" value="ACPS"/>
    <property type="match status" value="1"/>
</dbReference>
<dbReference type="SUPFAM" id="SSF56214">
    <property type="entry name" value="4'-phosphopantetheinyl transferase"/>
    <property type="match status" value="1"/>
</dbReference>
<sequence>MRVGCDIIAISRIEKIHSRHGKNFLDKFLSPKEQILIKNPATLAGLWAAKEAASKALGVGICELCSFFDIEISKDERNAPKLKYSQKITKDFNITQTSLSISHDNGFAIAIVAIV</sequence>
<organism>
    <name type="scientific">Campylobacter jejuni subsp. doylei (strain ATCC BAA-1458 / RM4099 / 269.97)</name>
    <dbReference type="NCBI Taxonomy" id="360109"/>
    <lineage>
        <taxon>Bacteria</taxon>
        <taxon>Pseudomonadati</taxon>
        <taxon>Campylobacterota</taxon>
        <taxon>Epsilonproteobacteria</taxon>
        <taxon>Campylobacterales</taxon>
        <taxon>Campylobacteraceae</taxon>
        <taxon>Campylobacter</taxon>
    </lineage>
</organism>
<feature type="chain" id="PRO_1000008409" description="Holo-[acyl-carrier-protein] synthase">
    <location>
        <begin position="1"/>
        <end position="115"/>
    </location>
</feature>
<feature type="binding site" evidence="1">
    <location>
        <position position="6"/>
    </location>
    <ligand>
        <name>Mg(2+)</name>
        <dbReference type="ChEBI" id="CHEBI:18420"/>
    </ligand>
</feature>
<feature type="binding site" evidence="1">
    <location>
        <position position="51"/>
    </location>
    <ligand>
        <name>Mg(2+)</name>
        <dbReference type="ChEBI" id="CHEBI:18420"/>
    </ligand>
</feature>
<gene>
    <name evidence="1" type="primary">acpS</name>
    <name type="ordered locus">JJD26997_1742</name>
</gene>
<keyword id="KW-0963">Cytoplasm</keyword>
<keyword id="KW-0275">Fatty acid biosynthesis</keyword>
<keyword id="KW-0276">Fatty acid metabolism</keyword>
<keyword id="KW-0444">Lipid biosynthesis</keyword>
<keyword id="KW-0443">Lipid metabolism</keyword>
<keyword id="KW-0460">Magnesium</keyword>
<keyword id="KW-0479">Metal-binding</keyword>
<keyword id="KW-0808">Transferase</keyword>
<protein>
    <recommendedName>
        <fullName evidence="1">Holo-[acyl-carrier-protein] synthase</fullName>
        <shortName evidence="1">Holo-ACP synthase</shortName>
        <ecNumber evidence="1">2.7.8.7</ecNumber>
    </recommendedName>
    <alternativeName>
        <fullName evidence="1">4'-phosphopantetheinyl transferase AcpS</fullName>
    </alternativeName>
</protein>
<proteinExistence type="inferred from homology"/>
<accession>A7H5D0</accession>
<evidence type="ECO:0000255" key="1">
    <source>
        <dbReference type="HAMAP-Rule" id="MF_00101"/>
    </source>
</evidence>
<reference key="1">
    <citation type="submission" date="2007-07" db="EMBL/GenBank/DDBJ databases">
        <title>Complete genome sequence of Campylobacter jejuni subsp doylei 269.97 isolated from human blood.</title>
        <authorList>
            <person name="Fouts D.E."/>
            <person name="Mongodin E.F."/>
            <person name="Puiu D."/>
            <person name="Sebastian Y."/>
            <person name="Miller W.G."/>
            <person name="Mandrell R.E."/>
            <person name="Lastovica A.J."/>
            <person name="Nelson K.E."/>
        </authorList>
    </citation>
    <scope>NUCLEOTIDE SEQUENCE [LARGE SCALE GENOMIC DNA]</scope>
    <source>
        <strain>ATCC BAA-1458 / RM4099 / 269.97</strain>
    </source>
</reference>